<reference key="1">
    <citation type="journal article" date="2004" name="PLoS Biol.">
        <title>Genomic insights into methanotrophy: the complete genome sequence of Methylococcus capsulatus (Bath).</title>
        <authorList>
            <person name="Ward N.L."/>
            <person name="Larsen O."/>
            <person name="Sakwa J."/>
            <person name="Bruseth L."/>
            <person name="Khouri H.M."/>
            <person name="Durkin A.S."/>
            <person name="Dimitrov G."/>
            <person name="Jiang L."/>
            <person name="Scanlan D."/>
            <person name="Kang K.H."/>
            <person name="Lewis M.R."/>
            <person name="Nelson K.E."/>
            <person name="Methe B.A."/>
            <person name="Wu M."/>
            <person name="Heidelberg J.F."/>
            <person name="Paulsen I.T."/>
            <person name="Fouts D.E."/>
            <person name="Ravel J."/>
            <person name="Tettelin H."/>
            <person name="Ren Q."/>
            <person name="Read T.D."/>
            <person name="DeBoy R.T."/>
            <person name="Seshadri R."/>
            <person name="Salzberg S.L."/>
            <person name="Jensen H.B."/>
            <person name="Birkeland N.K."/>
            <person name="Nelson W.C."/>
            <person name="Dodson R.J."/>
            <person name="Grindhaug S.H."/>
            <person name="Holt I.E."/>
            <person name="Eidhammer I."/>
            <person name="Jonasen I."/>
            <person name="Vanaken S."/>
            <person name="Utterback T.R."/>
            <person name="Feldblyum T.V."/>
            <person name="Fraser C.M."/>
            <person name="Lillehaug J.R."/>
            <person name="Eisen J.A."/>
        </authorList>
    </citation>
    <scope>NUCLEOTIDE SEQUENCE [LARGE SCALE GENOMIC DNA]</scope>
    <source>
        <strain>ATCC 33009 / NCIMB 11132 / Bath</strain>
    </source>
</reference>
<evidence type="ECO:0000255" key="1">
    <source>
        <dbReference type="HAMAP-Rule" id="MF_00821"/>
    </source>
</evidence>
<keyword id="KW-0143">Chaperone</keyword>
<keyword id="KW-0963">Cytoplasm</keyword>
<keyword id="KW-0653">Protein transport</keyword>
<keyword id="KW-1185">Reference proteome</keyword>
<keyword id="KW-0811">Translocation</keyword>
<keyword id="KW-0813">Transport</keyword>
<proteinExistence type="inferred from homology"/>
<accession>Q604K2</accession>
<gene>
    <name evidence="1" type="primary">secB</name>
    <name type="ordered locus">MCA2537</name>
</gene>
<organism>
    <name type="scientific">Methylococcus capsulatus (strain ATCC 33009 / NCIMB 11132 / Bath)</name>
    <dbReference type="NCBI Taxonomy" id="243233"/>
    <lineage>
        <taxon>Bacteria</taxon>
        <taxon>Pseudomonadati</taxon>
        <taxon>Pseudomonadota</taxon>
        <taxon>Gammaproteobacteria</taxon>
        <taxon>Methylococcales</taxon>
        <taxon>Methylococcaceae</taxon>
        <taxon>Methylococcus</taxon>
    </lineage>
</organism>
<sequence>MSEENQQPERQFAIQKLYVKDVSFETPNSPAVFTLKWEPKVEFNLGSKVQQLQEGLFEVSLSVTITVKLEEKTAYLVEICQAGIFTISGFPEQEMGPLLGSYCPNILFPYAREAVSDLVNKGGFPPMLLAPINFDALYMQQVQMAQQQAQPATPH</sequence>
<dbReference type="EMBL" id="AE017282">
    <property type="protein sequence ID" value="AAU91409.1"/>
    <property type="molecule type" value="Genomic_DNA"/>
</dbReference>
<dbReference type="RefSeq" id="WP_010961758.1">
    <property type="nucleotide sequence ID" value="NC_002977.6"/>
</dbReference>
<dbReference type="SMR" id="Q604K2"/>
<dbReference type="STRING" id="243233.MCA2537"/>
<dbReference type="GeneID" id="88224731"/>
<dbReference type="KEGG" id="mca:MCA2537"/>
<dbReference type="eggNOG" id="COG1952">
    <property type="taxonomic scope" value="Bacteria"/>
</dbReference>
<dbReference type="HOGENOM" id="CLU_111574_1_0_6"/>
<dbReference type="Proteomes" id="UP000006821">
    <property type="component" value="Chromosome"/>
</dbReference>
<dbReference type="GO" id="GO:0005737">
    <property type="term" value="C:cytoplasm"/>
    <property type="evidence" value="ECO:0007669"/>
    <property type="project" value="UniProtKB-SubCell"/>
</dbReference>
<dbReference type="GO" id="GO:0051082">
    <property type="term" value="F:unfolded protein binding"/>
    <property type="evidence" value="ECO:0007669"/>
    <property type="project" value="InterPro"/>
</dbReference>
<dbReference type="GO" id="GO:0006457">
    <property type="term" value="P:protein folding"/>
    <property type="evidence" value="ECO:0007669"/>
    <property type="project" value="UniProtKB-UniRule"/>
</dbReference>
<dbReference type="GO" id="GO:0051262">
    <property type="term" value="P:protein tetramerization"/>
    <property type="evidence" value="ECO:0007669"/>
    <property type="project" value="InterPro"/>
</dbReference>
<dbReference type="GO" id="GO:0015031">
    <property type="term" value="P:protein transport"/>
    <property type="evidence" value="ECO:0007669"/>
    <property type="project" value="UniProtKB-UniRule"/>
</dbReference>
<dbReference type="Gene3D" id="3.10.420.10">
    <property type="entry name" value="SecB-like"/>
    <property type="match status" value="1"/>
</dbReference>
<dbReference type="HAMAP" id="MF_00821">
    <property type="entry name" value="SecB"/>
    <property type="match status" value="1"/>
</dbReference>
<dbReference type="InterPro" id="IPR003708">
    <property type="entry name" value="SecB"/>
</dbReference>
<dbReference type="InterPro" id="IPR035958">
    <property type="entry name" value="SecB-like_sf"/>
</dbReference>
<dbReference type="NCBIfam" id="NF004393">
    <property type="entry name" value="PRK05751.1-4"/>
    <property type="match status" value="1"/>
</dbReference>
<dbReference type="NCBIfam" id="NF004394">
    <property type="entry name" value="PRK05751.1-5"/>
    <property type="match status" value="1"/>
</dbReference>
<dbReference type="NCBIfam" id="TIGR00809">
    <property type="entry name" value="secB"/>
    <property type="match status" value="1"/>
</dbReference>
<dbReference type="PANTHER" id="PTHR36918">
    <property type="match status" value="1"/>
</dbReference>
<dbReference type="PANTHER" id="PTHR36918:SF1">
    <property type="entry name" value="PROTEIN-EXPORT PROTEIN SECB"/>
    <property type="match status" value="1"/>
</dbReference>
<dbReference type="Pfam" id="PF02556">
    <property type="entry name" value="SecB"/>
    <property type="match status" value="1"/>
</dbReference>
<dbReference type="PRINTS" id="PR01594">
    <property type="entry name" value="SECBCHAPRONE"/>
</dbReference>
<dbReference type="SUPFAM" id="SSF54611">
    <property type="entry name" value="SecB-like"/>
    <property type="match status" value="1"/>
</dbReference>
<feature type="chain" id="PRO_0000055385" description="Protein-export protein SecB">
    <location>
        <begin position="1"/>
        <end position="155"/>
    </location>
</feature>
<name>SECB_METCA</name>
<protein>
    <recommendedName>
        <fullName evidence="1">Protein-export protein SecB</fullName>
    </recommendedName>
</protein>
<comment type="function">
    <text evidence="1">One of the proteins required for the normal export of preproteins out of the cell cytoplasm. It is a molecular chaperone that binds to a subset of precursor proteins, maintaining them in a translocation-competent state. It also specifically binds to its receptor SecA.</text>
</comment>
<comment type="subunit">
    <text evidence="1">Homotetramer, a dimer of dimers. One homotetramer interacts with 1 SecA dimer.</text>
</comment>
<comment type="subcellular location">
    <subcellularLocation>
        <location evidence="1">Cytoplasm</location>
    </subcellularLocation>
</comment>
<comment type="similarity">
    <text evidence="1">Belongs to the SecB family.</text>
</comment>